<accession>Q6B9Y8</accession>
<proteinExistence type="evidence at protein level"/>
<dbReference type="EC" id="2.7.7.52" evidence="6 7"/>
<dbReference type="EMBL" id="AY672414">
    <property type="protein sequence ID" value="AAT77544.1"/>
    <property type="molecule type" value="Genomic_DNA"/>
</dbReference>
<dbReference type="SMR" id="Q6B9Y8"/>
<dbReference type="EnsemblProtists" id="EAN78138">
    <property type="protein sequence ID" value="EAN78138"/>
    <property type="gene ID" value="Tb10.6k15.3370"/>
</dbReference>
<dbReference type="HOGENOM" id="CLU_324806_0_0_1"/>
<dbReference type="OMA" id="RMCIEDP"/>
<dbReference type="GO" id="GO:0005737">
    <property type="term" value="C:cytoplasm"/>
    <property type="evidence" value="ECO:0000314"/>
    <property type="project" value="UniProtKB"/>
</dbReference>
<dbReference type="GO" id="GO:0000166">
    <property type="term" value="F:nucleotide binding"/>
    <property type="evidence" value="ECO:0007669"/>
    <property type="project" value="UniProtKB-KW"/>
</dbReference>
<dbReference type="GO" id="GO:0003723">
    <property type="term" value="F:RNA binding"/>
    <property type="evidence" value="ECO:0007669"/>
    <property type="project" value="UniProtKB-KW"/>
</dbReference>
<dbReference type="GO" id="GO:0050265">
    <property type="term" value="F:RNA uridylyltransferase activity"/>
    <property type="evidence" value="ECO:0000314"/>
    <property type="project" value="UniProtKB"/>
</dbReference>
<dbReference type="GO" id="GO:0008270">
    <property type="term" value="F:zinc ion binding"/>
    <property type="evidence" value="ECO:0007669"/>
    <property type="project" value="UniProtKB-KW"/>
</dbReference>
<dbReference type="GO" id="GO:0031123">
    <property type="term" value="P:RNA 3'-end processing"/>
    <property type="evidence" value="ECO:0007669"/>
    <property type="project" value="TreeGrafter"/>
</dbReference>
<dbReference type="Gene3D" id="1.10.1410.10">
    <property type="match status" value="1"/>
</dbReference>
<dbReference type="Gene3D" id="3.30.460.50">
    <property type="match status" value="1"/>
</dbReference>
<dbReference type="Gene3D" id="3.30.70.1970">
    <property type="match status" value="1"/>
</dbReference>
<dbReference type="InterPro" id="IPR043519">
    <property type="entry name" value="NT_sf"/>
</dbReference>
<dbReference type="InterPro" id="IPR002058">
    <property type="entry name" value="PAP_assoc"/>
</dbReference>
<dbReference type="PANTHER" id="PTHR12271">
    <property type="entry name" value="POLY A POLYMERASE CID PAP -RELATED"/>
    <property type="match status" value="1"/>
</dbReference>
<dbReference type="PANTHER" id="PTHR12271:SF98">
    <property type="entry name" value="RNA EDITING 3' TERMINAL URIDYLYL TRANSFERASE 1"/>
    <property type="match status" value="1"/>
</dbReference>
<dbReference type="Pfam" id="PF03828">
    <property type="entry name" value="PAP_assoc"/>
    <property type="match status" value="1"/>
</dbReference>
<dbReference type="SUPFAM" id="SSF81301">
    <property type="entry name" value="Nucleotidyltransferase"/>
    <property type="match status" value="1"/>
</dbReference>
<dbReference type="SUPFAM" id="SSF81631">
    <property type="entry name" value="PAP/OAS1 substrate-binding domain"/>
    <property type="match status" value="1"/>
</dbReference>
<dbReference type="PROSITE" id="PS50157">
    <property type="entry name" value="ZINC_FINGER_C2H2_2"/>
    <property type="match status" value="1"/>
</dbReference>
<comment type="function">
    <text evidence="6">Terminal uridylyltransferase which catalyzes the addition of Us to the 3'-hydroxyl group of single-stranded RNAs (PubMed:15304317). Does not mediate RNA-independent UTP polymerization (PubMed:15304317).</text>
</comment>
<comment type="catalytic activity">
    <reaction evidence="6 7">
        <text>RNA(n) + UTP = RNA(n)-3'-uridine ribonucleotide + diphosphate</text>
        <dbReference type="Rhea" id="RHEA:14785"/>
        <dbReference type="Rhea" id="RHEA-COMP:14527"/>
        <dbReference type="Rhea" id="RHEA-COMP:17348"/>
        <dbReference type="ChEBI" id="CHEBI:33019"/>
        <dbReference type="ChEBI" id="CHEBI:46398"/>
        <dbReference type="ChEBI" id="CHEBI:140395"/>
        <dbReference type="ChEBI" id="CHEBI:173116"/>
        <dbReference type="EC" id="2.7.7.52"/>
    </reaction>
</comment>
<comment type="cofactor">
    <cofactor evidence="6">
        <name>Mg(2+)</name>
        <dbReference type="ChEBI" id="CHEBI:18420"/>
    </cofactor>
    <cofactor evidence="3">
        <name>Mn(2+)</name>
        <dbReference type="ChEBI" id="CHEBI:29035"/>
    </cofactor>
    <text evidence="2">Binds 1 Mg(2+) or Mn(2+) per subunit.</text>
</comment>
<comment type="biophysicochemical properties">
    <kinetics>
        <text evidence="6">KM is 36-48 uM for UTP (at 27 degrees Celsius and with 12(U) single-stranded RNA as substrate).</text>
    </kinetics>
</comment>
<comment type="subcellular location">
    <subcellularLocation>
        <location evidence="10">Cytoplasm</location>
    </subcellularLocation>
</comment>
<comment type="similarity">
    <text evidence="9">Belongs to the DNA polymerase type-B-like family.</text>
</comment>
<protein>
    <recommendedName>
        <fullName evidence="9">Terminal uridylyltransferase 3</fullName>
        <shortName evidence="8">TUTase 3</shortName>
        <ecNumber evidence="6 7">2.7.7.52</ecNumber>
    </recommendedName>
    <alternativeName>
        <fullName evidence="9">3' terminal uridylyl transferase</fullName>
    </alternativeName>
    <alternativeName>
        <fullName evidence="9">RNA editing 3' terminal uridylyltransferase 3</fullName>
    </alternativeName>
</protein>
<reference evidence="11" key="1">
    <citation type="journal article" date="2004" name="FEBS Lett.">
        <title>Multiple terminal uridylyltransferases of trypanosomes.</title>
        <authorList>
            <person name="Aphasizhev R."/>
            <person name="Aphasizheva I."/>
            <person name="Simpson L."/>
        </authorList>
    </citation>
    <scope>NUCLEOTIDE SEQUENCE [GENOMIC DNA]</scope>
    <scope>FUNCTION</scope>
    <scope>CATALYTIC ACTIVITY</scope>
    <scope>COFACTOR</scope>
    <scope>BIOPHYSICOCHEMICAL PROPERTIES</scope>
    <scope>SUBCELLULAR LOCATION</scope>
</reference>
<reference evidence="9" key="2">
    <citation type="journal article" date="2008" name="Biochim. Biophys. Acta">
        <title>Terminal RNA uridylyltransferases of trypanosomes.</title>
        <authorList>
            <person name="Aphasizhev R."/>
            <person name="Aphasizheva I."/>
        </authorList>
    </citation>
    <scope>CATALYTIC ACTIVITY</scope>
</reference>
<keyword id="KW-0963">Cytoplasm</keyword>
<keyword id="KW-0460">Magnesium</keyword>
<keyword id="KW-0464">Manganese</keyword>
<keyword id="KW-0479">Metal-binding</keyword>
<keyword id="KW-0547">Nucleotide-binding</keyword>
<keyword id="KW-0548">Nucleotidyltransferase</keyword>
<keyword id="KW-0694">RNA-binding</keyword>
<keyword id="KW-0808">Transferase</keyword>
<keyword id="KW-0862">Zinc</keyword>
<keyword id="KW-0863">Zinc-finger</keyword>
<gene>
    <name evidence="8" type="primary">TUT3</name>
</gene>
<sequence>MIFFFKKRYHVFLKAPSIRLMPCSFFFFRSFIKVIFIIRCIFFSSLSGDSCPTQRSRSTLACMFTSVPVAPTVVPGVVYSSGVHEEWKEAEQKLLDGCLIHSEGDGATKQIKEKLTSRNSQSVRCDLCAKMIESRDEEQIQEHFQVHHAALSLWCREILASKDNLLHYGCIPSGHIVSCGNFVLESAATLDMGRKTFDVIERAFSQMSQVISCFVRNLVLFPFGSCVSCGCWDGVSDADFTAIGLQDMKKGKWPPEDEKKVILRLTAALRKAGFFFGELEPLVRTRVPVVRRVQKVRVPLRSHGEHDTYSVVWSNSKEFSSPPRMLVEAAISSTVERKDSDTVTFHFKDSLKAVKFFCNSAMCGPRDMEVSWKTGSQLPEMFSLDFDLSCRAQGVRNSLFLRKYFQQDPFVRTGYLFLKKWSKLYGINNAKNGYLTSYAMSILWVHFLLENGLVKFVRPADVEPIPDLSQQKMSYLPLLRDDGDGGERPSDVLKSPELTMLRGALGGLIPLFFLYYTRIRWDKVVVTLRVPGGGPPVTPDSLGWVEANEVKCGPLRDRVWYRLCIDDPYEDNFNLGRHLSPDKASFVKVQFMRALASIVAGRPQQLLVDEQKFAEETMPAYVTRLSVQGELRNLRPVTVSALRQLLIDSAGADCVAIYEASHNWETLLDMASTLNNKSKEGDDDAEGVTNNQEGEPPDHVESCEAPRRHLLCSKMHSIDDALLVAGPLGVSDANIPAGLLGVYFLARGRAFRTAEDRDNFLMHAEAVSAARARGCTTREEILERVADAIPSIVRNGTLLDDLLVSGSEENITVQSPVVVETRCAETVQRKKSKGSKKRKNAVRRGNHAGQGTCSECGASGTDLWEASDKSADDGLYCGACWKAYNCQKN</sequence>
<name>TUT3_TRYBB</name>
<organism>
    <name type="scientific">Trypanosoma brucei brucei</name>
    <dbReference type="NCBI Taxonomy" id="5702"/>
    <lineage>
        <taxon>Eukaryota</taxon>
        <taxon>Discoba</taxon>
        <taxon>Euglenozoa</taxon>
        <taxon>Kinetoplastea</taxon>
        <taxon>Metakinetoplastina</taxon>
        <taxon>Trypanosomatida</taxon>
        <taxon>Trypanosomatidae</taxon>
        <taxon>Trypanosoma</taxon>
    </lineage>
</organism>
<feature type="chain" id="PRO_0000450680" description="Terminal uridylyltransferase 3">
    <location>
        <begin position="1"/>
        <end position="889"/>
    </location>
</feature>
<feature type="domain" description="PAP-associated" evidence="4">
    <location>
        <begin position="505"/>
        <end position="572"/>
    </location>
</feature>
<feature type="zinc finger region" description="C2H2-type; atypical" evidence="2">
    <location>
        <begin position="123"/>
        <end position="151"/>
    </location>
</feature>
<feature type="region of interest" description="Disordered" evidence="5">
    <location>
        <begin position="675"/>
        <end position="702"/>
    </location>
</feature>
<feature type="region of interest" description="Disordered" evidence="5">
    <location>
        <begin position="829"/>
        <end position="849"/>
    </location>
</feature>
<feature type="short sequence motif" description="Nucleotide recognition motif (NRM)" evidence="2">
    <location>
        <begin position="565"/>
        <end position="574"/>
    </location>
</feature>
<feature type="compositionally biased region" description="Basic residues" evidence="5">
    <location>
        <begin position="829"/>
        <end position="846"/>
    </location>
</feature>
<feature type="binding site" evidence="2">
    <location>
        <position position="125"/>
    </location>
    <ligand>
        <name>Zn(2+)</name>
        <dbReference type="ChEBI" id="CHEBI:29105"/>
    </ligand>
</feature>
<feature type="binding site" evidence="2">
    <location>
        <position position="128"/>
    </location>
    <ligand>
        <name>Zn(2+)</name>
        <dbReference type="ChEBI" id="CHEBI:29105"/>
    </ligand>
</feature>
<feature type="binding site" evidence="2">
    <location>
        <position position="143"/>
    </location>
    <ligand>
        <name>Zn(2+)</name>
        <dbReference type="ChEBI" id="CHEBI:29105"/>
    </ligand>
</feature>
<feature type="binding site" evidence="2">
    <location>
        <position position="148"/>
    </location>
    <ligand>
        <name>Zn(2+)</name>
        <dbReference type="ChEBI" id="CHEBI:29105"/>
    </ligand>
</feature>
<feature type="binding site" evidence="1">
    <location>
        <position position="225"/>
    </location>
    <ligand>
        <name>UTP</name>
        <dbReference type="ChEBI" id="CHEBI:46398"/>
    </ligand>
</feature>
<feature type="binding site" evidence="1">
    <location>
        <begin position="236"/>
        <end position="239"/>
    </location>
    <ligand>
        <name>UTP</name>
        <dbReference type="ChEBI" id="CHEBI:46398"/>
    </ligand>
</feature>
<feature type="binding site" evidence="1">
    <location>
        <position position="237"/>
    </location>
    <ligand>
        <name>Mg(2+)</name>
        <dbReference type="ChEBI" id="CHEBI:18420"/>
        <note>catalytic</note>
    </ligand>
</feature>
<feature type="binding site" evidence="1">
    <location>
        <position position="239"/>
    </location>
    <ligand>
        <name>Mg(2+)</name>
        <dbReference type="ChEBI" id="CHEBI:18420"/>
        <note>catalytic</note>
    </ligand>
</feature>
<feature type="binding site" evidence="1">
    <location>
        <position position="286"/>
    </location>
    <ligand>
        <name>RNA</name>
        <dbReference type="ChEBI" id="CHEBI:33697"/>
    </ligand>
</feature>
<feature type="binding site" evidence="1">
    <location>
        <begin position="394"/>
        <end position="398"/>
    </location>
    <ligand>
        <name>UTP</name>
        <dbReference type="ChEBI" id="CHEBI:46398"/>
    </ligand>
</feature>
<feature type="binding site" evidence="1">
    <location>
        <position position="419"/>
    </location>
    <ligand>
        <name>UTP</name>
        <dbReference type="ChEBI" id="CHEBI:46398"/>
    </ligand>
</feature>
<feature type="binding site" evidence="1">
    <location>
        <position position="423"/>
    </location>
    <ligand>
        <name>UTP</name>
        <dbReference type="ChEBI" id="CHEBI:46398"/>
    </ligand>
</feature>
<feature type="binding site" evidence="1">
    <location>
        <begin position="437"/>
        <end position="438"/>
    </location>
    <ligand>
        <name>UTP</name>
        <dbReference type="ChEBI" id="CHEBI:46398"/>
    </ligand>
</feature>
<feature type="site" description="Important for catalytic activity" evidence="1">
    <location>
        <position position="387"/>
    </location>
</feature>
<evidence type="ECO:0000250" key="1">
    <source>
        <dbReference type="UniProtKB" id="Q381M1"/>
    </source>
</evidence>
<evidence type="ECO:0000250" key="2">
    <source>
        <dbReference type="UniProtKB" id="Q8WQX5"/>
    </source>
</evidence>
<evidence type="ECO:0000250" key="3">
    <source>
        <dbReference type="UniProtKB" id="Q8WQX6"/>
    </source>
</evidence>
<evidence type="ECO:0000255" key="4"/>
<evidence type="ECO:0000256" key="5">
    <source>
        <dbReference type="SAM" id="MobiDB-lite"/>
    </source>
</evidence>
<evidence type="ECO:0000269" key="6">
    <source>
    </source>
</evidence>
<evidence type="ECO:0000269" key="7">
    <source>
    </source>
</evidence>
<evidence type="ECO:0000303" key="8">
    <source>
    </source>
</evidence>
<evidence type="ECO:0000305" key="9"/>
<evidence type="ECO:0000305" key="10">
    <source>
    </source>
</evidence>
<evidence type="ECO:0000312" key="11">
    <source>
        <dbReference type="EMBL" id="AAT77544.1"/>
    </source>
</evidence>